<comment type="function">
    <text>Regulatory photoreceptor which exists in two forms that are reversibly interconvertible by light: the Pr form that absorbs maximally in the red region of the spectrum and the Pfr form that absorbs maximally in the far-red region. Photoconversion of Pr to Pfr induces an array of morphogenic responses, whereas reconversion of Pfr to Pr cancels the induction of those responses. Pfr controls the expression of a number of nuclear genes including those encoding the small subunit of ribulose-bisphosphate carboxylase, chlorophyll A/B binding protein, protochlorophyllide reductase, rRNA, etc. It also controls the expression of its own gene(s) in a negative feedback fashion.</text>
</comment>
<comment type="subunit">
    <text evidence="1">Homodimer.</text>
</comment>
<comment type="PTM">
    <text evidence="1">Contains one covalently linked phytochromobilin chromophore.</text>
</comment>
<comment type="similarity">
    <text evidence="5">Belongs to the phytochrome family.</text>
</comment>
<accession>O49934</accession>
<proteinExistence type="evidence at transcript level"/>
<name>PHYA_POPTM</name>
<gene>
    <name type="primary">PHYA</name>
</gene>
<organism>
    <name type="scientific">Populus tremuloides</name>
    <name type="common">Quaking aspen</name>
    <dbReference type="NCBI Taxonomy" id="3693"/>
    <lineage>
        <taxon>Eukaryota</taxon>
        <taxon>Viridiplantae</taxon>
        <taxon>Streptophyta</taxon>
        <taxon>Embryophyta</taxon>
        <taxon>Tracheophyta</taxon>
        <taxon>Spermatophyta</taxon>
        <taxon>Magnoliopsida</taxon>
        <taxon>eudicotyledons</taxon>
        <taxon>Gunneridae</taxon>
        <taxon>Pentapetalae</taxon>
        <taxon>rosids</taxon>
        <taxon>fabids</taxon>
        <taxon>Malpighiales</taxon>
        <taxon>Salicaceae</taxon>
        <taxon>Saliceae</taxon>
        <taxon>Populus</taxon>
    </lineage>
</organism>
<sequence>MSSSRPSHSSSNSARSRHSARIIAQTTVDAKLHADFEESGSSFDYSSSVRVTDSVGGDQPPRSDKVTTAYLHHIQKGKLIQPFGCLLALDEKTFRVVAYSENAPELLTMVSHAVPSVGEHPVLGIGTDIRTIFTAPSASALQKAMGFGDVSLLNPILVHCKTSGKPFYAIVHRVTGSLIIDFEPVKPYEVPMTAAGALQSYKLAAKAITRLQSLPSGSMERLCDTMVQEVFELTGYDRAMAYKFHDDDHGEVVSEVTKPGMEPYLGLHYPATDIPQASRFLFMKNKVRMIVDCHAKHVKVLQDEKLPFDLTLCGSTLRAPHSCHLQYMENMNSIASLVMAVVVNDGDEDGDTPDSANPQKRKRLWGLVVCHNTSPRFVPFPLRYACEFLAQVFAIHVNKELELENQIVEKNILRTQTLLCDMLMRDAPLGIVTQSPNIMDLVKCDGAVLFYRNKIWRLGITPSDLQLQDIAFWLSEYHMDSTGLSTDSLYDAGYPGALALGDVVCGMAAVRITSKDMLFWFRSQTAAEIRWGGAKHEPGEKDDGRRMHPRSSFKAFLEVVKTRSLPWKDYEMDAIHSLQLILRNTFKDIETMDVDTKTIHARLSDLKIEGMQELEAVTSEMVRLIETATVPILAVDVDGLVNGWNTKISELTGLLVDKAIGKHLLTLVEDSSVDIVKRMLFLALQGKEEQNIQFEIKTHGSKSECGPICLVVNACASRDLHENVVGVCFVGQDITGQKMVMDKFTRIEGDYKAIVQNRNPLIPPIFGTDEFGWCSEWNPAMTNLTGWKREEVLDKMLLGEVFGLNMACCRLKNQEAFVNLGVVLNTAMTGQESEKVSFGFFARTGKYVECLLCVSKKLDREGAVTGVFCFLQLASQELQQALHVQRLSEQTALKRLKALAYLKKQIWNPLSGIIFSGKMMEGTELGAEQKELLHTSAQCQCQLSKILDDSDLDSIIEGYLDLEMVEFTLREYYGCYQSSHDEKHEKGIPIINDALKMAETLYGDSIRLQQVLADFCRCQLILTPSGGLLTVSASFFQRPVGAILFILVHSGKLRIRHLGAGIPEALVDQMYGEDTGASVEGISLVISRKLVKLMNGDVRYMREAGKSSFIISVELAGGHKSQKRA</sequence>
<keyword id="KW-0157">Chromophore</keyword>
<keyword id="KW-0600">Photoreceptor protein</keyword>
<keyword id="KW-0675">Receptor</keyword>
<keyword id="KW-0677">Repeat</keyword>
<keyword id="KW-0716">Sensory transduction</keyword>
<keyword id="KW-0804">Transcription</keyword>
<keyword id="KW-0805">Transcription regulation</keyword>
<dbReference type="EMBL" id="AJ001318">
    <property type="protein sequence ID" value="CAA04679.1"/>
    <property type="molecule type" value="mRNA"/>
</dbReference>
<dbReference type="PIR" id="T09835">
    <property type="entry name" value="T09835"/>
</dbReference>
<dbReference type="SMR" id="O49934"/>
<dbReference type="GO" id="GO:0009881">
    <property type="term" value="F:photoreceptor activity"/>
    <property type="evidence" value="ECO:0007669"/>
    <property type="project" value="UniProtKB-KW"/>
</dbReference>
<dbReference type="GO" id="GO:0042803">
    <property type="term" value="F:protein homodimerization activity"/>
    <property type="evidence" value="ECO:0007669"/>
    <property type="project" value="InterPro"/>
</dbReference>
<dbReference type="GO" id="GO:0009584">
    <property type="term" value="P:detection of visible light"/>
    <property type="evidence" value="ECO:0007669"/>
    <property type="project" value="InterPro"/>
</dbReference>
<dbReference type="GO" id="GO:0009585">
    <property type="term" value="P:red, far-red light phototransduction"/>
    <property type="evidence" value="ECO:0007669"/>
    <property type="project" value="InterPro"/>
</dbReference>
<dbReference type="GO" id="GO:0006355">
    <property type="term" value="P:regulation of DNA-templated transcription"/>
    <property type="evidence" value="ECO:0007669"/>
    <property type="project" value="InterPro"/>
</dbReference>
<dbReference type="CDD" id="cd00130">
    <property type="entry name" value="PAS"/>
    <property type="match status" value="2"/>
</dbReference>
<dbReference type="FunFam" id="3.30.450.20:FF:000039">
    <property type="entry name" value="Phytochrome"/>
    <property type="match status" value="1"/>
</dbReference>
<dbReference type="FunFam" id="3.30.450.270:FF:000001">
    <property type="entry name" value="Phytochrome"/>
    <property type="match status" value="1"/>
</dbReference>
<dbReference type="Gene3D" id="3.30.450.270">
    <property type="match status" value="1"/>
</dbReference>
<dbReference type="Gene3D" id="3.30.450.40">
    <property type="match status" value="1"/>
</dbReference>
<dbReference type="Gene3D" id="3.30.565.10">
    <property type="entry name" value="Histidine kinase-like ATPase, C-terminal domain"/>
    <property type="match status" value="1"/>
</dbReference>
<dbReference type="Gene3D" id="3.30.450.20">
    <property type="entry name" value="PAS domain"/>
    <property type="match status" value="3"/>
</dbReference>
<dbReference type="InterPro" id="IPR003018">
    <property type="entry name" value="GAF"/>
</dbReference>
<dbReference type="InterPro" id="IPR029016">
    <property type="entry name" value="GAF-like_dom_sf"/>
</dbReference>
<dbReference type="InterPro" id="IPR036890">
    <property type="entry name" value="HATPase_C_sf"/>
</dbReference>
<dbReference type="InterPro" id="IPR005467">
    <property type="entry name" value="His_kinase_dom"/>
</dbReference>
<dbReference type="InterPro" id="IPR000014">
    <property type="entry name" value="PAS"/>
</dbReference>
<dbReference type="InterPro" id="IPR035965">
    <property type="entry name" value="PAS-like_dom_sf"/>
</dbReference>
<dbReference type="InterPro" id="IPR013654">
    <property type="entry name" value="PAS_2"/>
</dbReference>
<dbReference type="InterPro" id="IPR013767">
    <property type="entry name" value="PAS_fold"/>
</dbReference>
<dbReference type="InterPro" id="IPR016132">
    <property type="entry name" value="Phyto_chromo_attachment"/>
</dbReference>
<dbReference type="InterPro" id="IPR013516">
    <property type="entry name" value="Phyto_chromo_BS"/>
</dbReference>
<dbReference type="InterPro" id="IPR001294">
    <property type="entry name" value="Phytochrome"/>
</dbReference>
<dbReference type="InterPro" id="IPR012129">
    <property type="entry name" value="Phytochrome_A-E"/>
</dbReference>
<dbReference type="InterPro" id="IPR013515">
    <property type="entry name" value="Phytochrome_cen-reg"/>
</dbReference>
<dbReference type="InterPro" id="IPR043150">
    <property type="entry name" value="Phytochrome_PHY_sf"/>
</dbReference>
<dbReference type="NCBIfam" id="TIGR00229">
    <property type="entry name" value="sensory_box"/>
    <property type="match status" value="1"/>
</dbReference>
<dbReference type="PANTHER" id="PTHR47876">
    <property type="entry name" value="OS08G0260000 PROTEIN"/>
    <property type="match status" value="1"/>
</dbReference>
<dbReference type="PANTHER" id="PTHR47876:SF3">
    <property type="entry name" value="PHYTOCHROME 1"/>
    <property type="match status" value="1"/>
</dbReference>
<dbReference type="Pfam" id="PF01590">
    <property type="entry name" value="GAF"/>
    <property type="match status" value="1"/>
</dbReference>
<dbReference type="Pfam" id="PF02518">
    <property type="entry name" value="HATPase_c"/>
    <property type="match status" value="1"/>
</dbReference>
<dbReference type="Pfam" id="PF00989">
    <property type="entry name" value="PAS"/>
    <property type="match status" value="2"/>
</dbReference>
<dbReference type="Pfam" id="PF08446">
    <property type="entry name" value="PAS_2"/>
    <property type="match status" value="1"/>
</dbReference>
<dbReference type="Pfam" id="PF00360">
    <property type="entry name" value="PHY"/>
    <property type="match status" value="1"/>
</dbReference>
<dbReference type="PIRSF" id="PIRSF000084">
    <property type="entry name" value="Phytochrome"/>
    <property type="match status" value="1"/>
</dbReference>
<dbReference type="PRINTS" id="PR01033">
    <property type="entry name" value="PHYTOCHROME"/>
</dbReference>
<dbReference type="SMART" id="SM00065">
    <property type="entry name" value="GAF"/>
    <property type="match status" value="1"/>
</dbReference>
<dbReference type="SMART" id="SM00387">
    <property type="entry name" value="HATPase_c"/>
    <property type="match status" value="1"/>
</dbReference>
<dbReference type="SMART" id="SM00091">
    <property type="entry name" value="PAS"/>
    <property type="match status" value="2"/>
</dbReference>
<dbReference type="SUPFAM" id="SSF55874">
    <property type="entry name" value="ATPase domain of HSP90 chaperone/DNA topoisomerase II/histidine kinase"/>
    <property type="match status" value="1"/>
</dbReference>
<dbReference type="SUPFAM" id="SSF55781">
    <property type="entry name" value="GAF domain-like"/>
    <property type="match status" value="2"/>
</dbReference>
<dbReference type="SUPFAM" id="SSF55785">
    <property type="entry name" value="PYP-like sensor domain (PAS domain)"/>
    <property type="match status" value="3"/>
</dbReference>
<dbReference type="PROSITE" id="PS50109">
    <property type="entry name" value="HIS_KIN"/>
    <property type="match status" value="1"/>
</dbReference>
<dbReference type="PROSITE" id="PS50112">
    <property type="entry name" value="PAS"/>
    <property type="match status" value="2"/>
</dbReference>
<dbReference type="PROSITE" id="PS00245">
    <property type="entry name" value="PHYTOCHROME_1"/>
    <property type="match status" value="1"/>
</dbReference>
<dbReference type="PROSITE" id="PS50046">
    <property type="entry name" value="PHYTOCHROME_2"/>
    <property type="match status" value="1"/>
</dbReference>
<feature type="chain" id="PRO_0000171986" description="Phytochrome A">
    <location>
        <begin position="1"/>
        <end position="1125"/>
    </location>
</feature>
<feature type="domain" description="GAF">
    <location>
        <begin position="218"/>
        <end position="401"/>
    </location>
</feature>
<feature type="domain" description="PAS 1" evidence="3">
    <location>
        <begin position="617"/>
        <end position="687"/>
    </location>
</feature>
<feature type="domain" description="PAS 2" evidence="3">
    <location>
        <begin position="750"/>
        <end position="821"/>
    </location>
</feature>
<feature type="domain" description="Histidine kinase" evidence="2">
    <location>
        <begin position="901"/>
        <end position="1117"/>
    </location>
</feature>
<feature type="region of interest" description="Disordered" evidence="4">
    <location>
        <begin position="1"/>
        <end position="22"/>
    </location>
</feature>
<feature type="region of interest" description="Disordered" evidence="4">
    <location>
        <begin position="38"/>
        <end position="64"/>
    </location>
</feature>
<feature type="compositionally biased region" description="Low complexity" evidence="4">
    <location>
        <begin position="1"/>
        <end position="14"/>
    </location>
</feature>
<feature type="compositionally biased region" description="Low complexity" evidence="4">
    <location>
        <begin position="39"/>
        <end position="48"/>
    </location>
</feature>
<feature type="binding site" description="covalent" evidence="1">
    <location>
        <position position="323"/>
    </location>
    <ligand>
        <name>phytochromobilin</name>
        <dbReference type="ChEBI" id="CHEBI:189064"/>
    </ligand>
</feature>
<protein>
    <recommendedName>
        <fullName>Phytochrome A</fullName>
    </recommendedName>
</protein>
<reference key="1">
    <citation type="online journal article" date="1997" name="Plant Gene Register">
        <title>Isolation of a cDNA encoding a phytochrome a from Populus tremula x tremuloides.</title>
        <authorList>
            <person name="Eriksson M.E."/>
            <person name="Moritz T."/>
        </authorList>
        <locator>PGR97-186</locator>
    </citation>
    <scope>NUCLEOTIDE SEQUENCE [MRNA]</scope>
    <source>
        <strain>P.tremula X P.tremuloides T89</strain>
        <tissue>Leaf</tissue>
    </source>
</reference>
<evidence type="ECO:0000250" key="1"/>
<evidence type="ECO:0000255" key="2">
    <source>
        <dbReference type="PROSITE-ProRule" id="PRU00107"/>
    </source>
</evidence>
<evidence type="ECO:0000255" key="3">
    <source>
        <dbReference type="PROSITE-ProRule" id="PRU00140"/>
    </source>
</evidence>
<evidence type="ECO:0000256" key="4">
    <source>
        <dbReference type="SAM" id="MobiDB-lite"/>
    </source>
</evidence>
<evidence type="ECO:0000305" key="5"/>